<sequence length="15" mass="1631">CCIARQICEGCICCI</sequence>
<feature type="peptide" id="PRO_0000445047" description="Alpha-conotoxin-like Sm3.2" evidence="3">
    <location>
        <begin position="1"/>
        <end position="15"/>
    </location>
</feature>
<feature type="disulfide bond" evidence="2">
    <location>
        <begin position="1"/>
        <end position="13"/>
    </location>
</feature>
<feature type="disulfide bond" evidence="2">
    <location>
        <begin position="2"/>
        <end position="11"/>
    </location>
</feature>
<feature type="disulfide bond" evidence="2">
    <location>
        <begin position="8"/>
        <end position="14"/>
    </location>
</feature>
<feature type="unsure residue" description="I or L" evidence="5">
    <location>
        <position position="3"/>
    </location>
</feature>
<feature type="unsure residue" description="I or L" evidence="5">
    <location>
        <position position="7"/>
    </location>
</feature>
<feature type="unsure residue" description="I or L" evidence="5">
    <location>
        <position position="12"/>
    </location>
</feature>
<feature type="unsure residue" description="I or L" evidence="5">
    <location>
        <position position="15"/>
    </location>
</feature>
<proteinExistence type="evidence at protein level"/>
<comment type="function">
    <text evidence="1">Alpha-conotoxins act on postsynaptic membranes, they bind to the nicotinic acetylcholine receptors (nAChR) and thus inhibit them.</text>
</comment>
<comment type="subcellular location">
    <subcellularLocation>
        <location evidence="3">Secreted</location>
    </subcellularLocation>
</comment>
<comment type="tissue specificity">
    <text evidence="5">Expressed by the venom duct.</text>
</comment>
<comment type="domain">
    <text>The cysteine framework is III (CC-C-C-CC). Classified in the M-1 branch, since 1 residue stands between the fourth and the fifth cysteine residues.</text>
</comment>
<comment type="similarity">
    <text evidence="4">Belongs to the conotoxin M superfamily.</text>
</comment>
<evidence type="ECO:0000250" key="1"/>
<evidence type="ECO:0000250" key="2">
    <source>
        <dbReference type="UniProtKB" id="Q5EHP3"/>
    </source>
</evidence>
<evidence type="ECO:0000269" key="3">
    <source>
    </source>
</evidence>
<evidence type="ECO:0000305" key="4"/>
<evidence type="ECO:0000305" key="5">
    <source>
    </source>
</evidence>
<keyword id="KW-0903">Direct protein sequencing</keyword>
<keyword id="KW-1015">Disulfide bond</keyword>
<keyword id="KW-0964">Secreted</keyword>
<reference key="1">
    <citation type="journal article" date="2012" name="J. Proteome Res.">
        <title>Constrained de novo sequencing of conotoxins.</title>
        <authorList>
            <person name="Bhatia S."/>
            <person name="Kil Y.J."/>
            <person name="Ueberheide B."/>
            <person name="Chait B.T."/>
            <person name="Tayo L."/>
            <person name="Cruz L."/>
            <person name="Lu B."/>
            <person name="Yates J.R. III"/>
            <person name="Bern M."/>
        </authorList>
    </citation>
    <scope>PROTEIN SEQUENCE</scope>
    <scope>IDENTIFICATION BY MASS SPECTROMETRY</scope>
    <scope>SUBCELLULAR LOCATION</scope>
    <source>
        <tissue>Venom</tissue>
    </source>
</reference>
<organism>
    <name type="scientific">Conus stercusmuscarum</name>
    <name type="common">Fly-specked cone</name>
    <dbReference type="NCBI Taxonomy" id="89452"/>
    <lineage>
        <taxon>Eukaryota</taxon>
        <taxon>Metazoa</taxon>
        <taxon>Spiralia</taxon>
        <taxon>Lophotrochozoa</taxon>
        <taxon>Mollusca</taxon>
        <taxon>Gastropoda</taxon>
        <taxon>Caenogastropoda</taxon>
        <taxon>Neogastropoda</taxon>
        <taxon>Conoidea</taxon>
        <taxon>Conidae</taxon>
        <taxon>Conus</taxon>
        <taxon>Pionoconus</taxon>
    </lineage>
</organism>
<accession>P0DPL1</accession>
<dbReference type="GO" id="GO:0005576">
    <property type="term" value="C:extracellular region"/>
    <property type="evidence" value="ECO:0007669"/>
    <property type="project" value="UniProtKB-SubCell"/>
</dbReference>
<name>CM32_CONSE</name>
<protein>
    <recommendedName>
        <fullName evidence="4">Alpha-conotoxin-like Sm3.2</fullName>
    </recommendedName>
</protein>